<gene>
    <name evidence="1" type="primary">psbF</name>
</gene>
<dbReference type="EMBL" id="X66250">
    <property type="protein sequence ID" value="CAA46977.1"/>
    <property type="molecule type" value="Genomic_DNA"/>
</dbReference>
<dbReference type="EMBL" id="X80195">
    <property type="protein sequence ID" value="CAA56486.1"/>
    <property type="molecule type" value="Genomic_DNA"/>
</dbReference>
<dbReference type="EMBL" id="X79564">
    <property type="protein sequence ID" value="CAA56101.1"/>
    <property type="molecule type" value="Genomic_DNA"/>
</dbReference>
<dbReference type="EMBL" id="FJ423446">
    <property type="protein sequence ID" value="ACJ50130.1"/>
    <property type="molecule type" value="Genomic_DNA"/>
</dbReference>
<dbReference type="EMBL" id="BK000554">
    <property type="protein sequence ID" value="DAA00944.1"/>
    <property type="molecule type" value="Genomic_DNA"/>
</dbReference>
<dbReference type="PIR" id="S53883">
    <property type="entry name" value="S53883"/>
</dbReference>
<dbReference type="RefSeq" id="NP_958399.1">
    <property type="nucleotide sequence ID" value="NC_005353.1"/>
</dbReference>
<dbReference type="PDB" id="6KAC">
    <property type="method" value="EM"/>
    <property type="resolution" value="2.70 A"/>
    <property type="chains" value="F/f=1-44"/>
</dbReference>
<dbReference type="PDB" id="6KAD">
    <property type="method" value="EM"/>
    <property type="resolution" value="3.40 A"/>
    <property type="chains" value="F/f=1-44"/>
</dbReference>
<dbReference type="PDB" id="6KAF">
    <property type="method" value="EM"/>
    <property type="resolution" value="3.73 A"/>
    <property type="chains" value="F/f=1-44"/>
</dbReference>
<dbReference type="PDB" id="8KDE">
    <property type="method" value="EM"/>
    <property type="resolution" value="2.60 A"/>
    <property type="chains" value="F=1-44"/>
</dbReference>
<dbReference type="PDB" id="8R2I">
    <property type="method" value="EM"/>
    <property type="resolution" value="2.90 A"/>
    <property type="chains" value="F=12-44"/>
</dbReference>
<dbReference type="PDB" id="8ZEE">
    <property type="method" value="EM"/>
    <property type="resolution" value="2.90 A"/>
    <property type="chains" value="F=1-44"/>
</dbReference>
<dbReference type="PDBsum" id="6KAC"/>
<dbReference type="PDBsum" id="6KAD"/>
<dbReference type="PDBsum" id="6KAF"/>
<dbReference type="PDBsum" id="8KDE"/>
<dbReference type="PDBsum" id="8R2I"/>
<dbReference type="PDBsum" id="8ZEE"/>
<dbReference type="EMDB" id="EMD-18848"/>
<dbReference type="EMDB" id="EMD-37133"/>
<dbReference type="EMDB" id="EMD-60026"/>
<dbReference type="EMDB" id="EMD-9955"/>
<dbReference type="EMDB" id="EMD-9956"/>
<dbReference type="EMDB" id="EMD-9957"/>
<dbReference type="SMR" id="Q08363"/>
<dbReference type="FunCoup" id="Q08363">
    <property type="interactions" value="43"/>
</dbReference>
<dbReference type="STRING" id="3055.Q08363"/>
<dbReference type="PaxDb" id="3055-DAA00944"/>
<dbReference type="GeneID" id="2716994"/>
<dbReference type="KEGG" id="cre:ChreCp043"/>
<dbReference type="eggNOG" id="ENOG502SEUE">
    <property type="taxonomic scope" value="Eukaryota"/>
</dbReference>
<dbReference type="HOGENOM" id="CLU_211753_1_0_1"/>
<dbReference type="InParanoid" id="Q08363"/>
<dbReference type="Proteomes" id="UP000006906">
    <property type="component" value="Chloroplast"/>
</dbReference>
<dbReference type="GO" id="GO:0009535">
    <property type="term" value="C:chloroplast thylakoid membrane"/>
    <property type="evidence" value="ECO:0007669"/>
    <property type="project" value="UniProtKB-SubCell"/>
</dbReference>
<dbReference type="GO" id="GO:0009539">
    <property type="term" value="C:photosystem II reaction center"/>
    <property type="evidence" value="ECO:0007669"/>
    <property type="project" value="InterPro"/>
</dbReference>
<dbReference type="GO" id="GO:0009055">
    <property type="term" value="F:electron transfer activity"/>
    <property type="evidence" value="ECO:0007669"/>
    <property type="project" value="UniProtKB-UniRule"/>
</dbReference>
<dbReference type="GO" id="GO:0020037">
    <property type="term" value="F:heme binding"/>
    <property type="evidence" value="ECO:0007669"/>
    <property type="project" value="InterPro"/>
</dbReference>
<dbReference type="GO" id="GO:0005506">
    <property type="term" value="F:iron ion binding"/>
    <property type="evidence" value="ECO:0007669"/>
    <property type="project" value="UniProtKB-UniRule"/>
</dbReference>
<dbReference type="GO" id="GO:0009767">
    <property type="term" value="P:photosynthetic electron transport chain"/>
    <property type="evidence" value="ECO:0007669"/>
    <property type="project" value="InterPro"/>
</dbReference>
<dbReference type="HAMAP" id="MF_00643">
    <property type="entry name" value="PSII_PsbF"/>
    <property type="match status" value="1"/>
</dbReference>
<dbReference type="InterPro" id="IPR006241">
    <property type="entry name" value="PSII_cyt_b559_bsu"/>
</dbReference>
<dbReference type="InterPro" id="IPR006216">
    <property type="entry name" value="PSII_cyt_b559_CS"/>
</dbReference>
<dbReference type="InterPro" id="IPR013081">
    <property type="entry name" value="PSII_cyt_b559_N"/>
</dbReference>
<dbReference type="NCBIfam" id="TIGR01333">
    <property type="entry name" value="cyt_b559_beta"/>
    <property type="match status" value="1"/>
</dbReference>
<dbReference type="Pfam" id="PF00283">
    <property type="entry name" value="Cytochrom_B559"/>
    <property type="match status" value="1"/>
</dbReference>
<dbReference type="PIRSF" id="PIRSF000037">
    <property type="entry name" value="PsbF"/>
    <property type="match status" value="1"/>
</dbReference>
<dbReference type="SUPFAM" id="SSF161045">
    <property type="entry name" value="Cytochrome b559 subunits"/>
    <property type="match status" value="1"/>
</dbReference>
<dbReference type="PROSITE" id="PS00537">
    <property type="entry name" value="CYTOCHROME_B559"/>
    <property type="match status" value="1"/>
</dbReference>
<comment type="function">
    <text evidence="1">This b-type cytochrome is tightly associated with the reaction center of photosystem II (PSII). PSII is a light-driven water:plastoquinone oxidoreductase that uses light energy to abstract electrons from H(2)O, generating O(2) and a proton gradient subsequently used for ATP formation. It consists of a core antenna complex that captures photons, and an electron transfer chain that converts photonic excitation into a charge separation.</text>
</comment>
<comment type="cofactor">
    <cofactor evidence="1">
        <name>heme b</name>
        <dbReference type="ChEBI" id="CHEBI:60344"/>
    </cofactor>
    <text evidence="1">With its partner (PsbE) binds heme. PSII binds additional chlorophylls, carotenoids and specific lipids.</text>
</comment>
<comment type="subunit">
    <text evidence="1">Heterodimer of an alpha subunit and a beta subunit. PSII is composed of 1 copy each of membrane proteins PsbA, PsbB, PsbC, PsbD, PsbE, PsbF, PsbH, PsbI, PsbJ, PsbK, PsbL, PsbM, PsbT, PsbX, PsbY, PsbZ, Psb30/Ycf12, at least 3 peripheral proteins of the oxygen-evolving complex and a large number of cofactors. It forms dimeric complexes.</text>
</comment>
<comment type="subcellular location">
    <subcellularLocation>
        <location evidence="1">Plastid</location>
        <location evidence="1">Chloroplast thylakoid membrane</location>
        <topology evidence="1">Single-pass membrane protein</topology>
    </subcellularLocation>
</comment>
<comment type="similarity">
    <text evidence="1">Belongs to the PsbE/PsbF family.</text>
</comment>
<accession>Q08363</accession>
<accession>B7U1I3</accession>
<sequence>MTTKKSAEVLVYPIFTVRWLAIHGIAVPTIFFLGAITAMQFIQR</sequence>
<geneLocation type="chloroplast"/>
<keyword id="KW-0002">3D-structure</keyword>
<keyword id="KW-0150">Chloroplast</keyword>
<keyword id="KW-0249">Electron transport</keyword>
<keyword id="KW-0349">Heme</keyword>
<keyword id="KW-0408">Iron</keyword>
<keyword id="KW-0472">Membrane</keyword>
<keyword id="KW-0479">Metal-binding</keyword>
<keyword id="KW-0602">Photosynthesis</keyword>
<keyword id="KW-0604">Photosystem II</keyword>
<keyword id="KW-0934">Plastid</keyword>
<keyword id="KW-1185">Reference proteome</keyword>
<keyword id="KW-0793">Thylakoid</keyword>
<keyword id="KW-0812">Transmembrane</keyword>
<keyword id="KW-1133">Transmembrane helix</keyword>
<keyword id="KW-0813">Transport</keyword>
<organism>
    <name type="scientific">Chlamydomonas reinhardtii</name>
    <name type="common">Chlamydomonas smithii</name>
    <dbReference type="NCBI Taxonomy" id="3055"/>
    <lineage>
        <taxon>Eukaryota</taxon>
        <taxon>Viridiplantae</taxon>
        <taxon>Chlorophyta</taxon>
        <taxon>core chlorophytes</taxon>
        <taxon>Chlorophyceae</taxon>
        <taxon>CS clade</taxon>
        <taxon>Chlamydomonadales</taxon>
        <taxon>Chlamydomonadaceae</taxon>
        <taxon>Chlamydomonas</taxon>
    </lineage>
</organism>
<proteinExistence type="evidence at protein level"/>
<name>PSBF_CHLRE</name>
<evidence type="ECO:0000255" key="1">
    <source>
        <dbReference type="HAMAP-Rule" id="MF_00643"/>
    </source>
</evidence>
<evidence type="ECO:0000305" key="2"/>
<evidence type="ECO:0007829" key="3">
    <source>
        <dbReference type="PDB" id="8KDE"/>
    </source>
</evidence>
<protein>
    <recommendedName>
        <fullName evidence="1">Cytochrome b559 subunit beta</fullName>
    </recommendedName>
    <alternativeName>
        <fullName evidence="1">PSII reaction center subunit VI</fullName>
    </alternativeName>
</protein>
<feature type="chain" id="PRO_0000200375" description="Cytochrome b559 subunit beta">
    <location>
        <begin position="1"/>
        <end position="44"/>
    </location>
</feature>
<feature type="transmembrane region" description="Helical" evidence="1">
    <location>
        <begin position="19"/>
        <end position="35"/>
    </location>
</feature>
<feature type="binding site" description="axial binding residue" evidence="1">
    <location>
        <position position="23"/>
    </location>
    <ligand>
        <name>heme</name>
        <dbReference type="ChEBI" id="CHEBI:30413"/>
        <note>ligand shared with alpha subunit</note>
    </ligand>
    <ligandPart>
        <name>Fe</name>
        <dbReference type="ChEBI" id="CHEBI:18248"/>
    </ligandPart>
</feature>
<feature type="sequence conflict" description="In Ref. 1; CAA46977." evidence="2" ref="1">
    <original>IHGIAVPTI</original>
    <variation>TTVLQYQQF</variation>
    <location>
        <begin position="22"/>
        <end position="30"/>
    </location>
</feature>
<feature type="helix" evidence="3">
    <location>
        <begin position="17"/>
        <end position="40"/>
    </location>
</feature>
<reference key="1">
    <citation type="journal article" date="1992" name="Curr. Genet.">
        <title>Organization and structure of plastome psbF, psbL, petG and ORF712 genes in Chlamydomonas reinhardtii.</title>
        <authorList>
            <person name="Fong S.E."/>
            <person name="Surzycki S.J."/>
        </authorList>
    </citation>
    <scope>NUCLEOTIDE SEQUENCE [GENOMIC DNA]</scope>
</reference>
<reference key="2">
    <citation type="journal article" date="1994" name="Biochim. Biophys. Acta">
        <title>Nucleotide sequence of the psbE, psbF and trnM genes from the chloroplast genome of Chlamydomonas reinhardtii.</title>
        <authorList>
            <person name="Alizadeh S."/>
            <person name="Nechustai R."/>
            <person name="Barber J."/>
            <person name="Nixon P."/>
        </authorList>
    </citation>
    <scope>NUCLEOTIDE SEQUENCE [GENOMIC DNA]</scope>
    <source>
        <strain>137c / CC-125</strain>
    </source>
</reference>
<reference key="3">
    <citation type="journal article" date="1995" name="Mol. Gen. Genet.">
        <title>An unusual organization of the genes encoding cytochrome b559 in Chlamydomonas reinhardtii: psbE and psbF genes are separately transcribed from different regions of the plastid chromosome.</title>
        <authorList>
            <person name="Mor T.S."/>
            <person name="Ohad I."/>
            <person name="Hirschberg J."/>
            <person name="Pakrasi H.B."/>
        </authorList>
    </citation>
    <scope>NUCLEOTIDE SEQUENCE [GENOMIC DNA]</scope>
    <source>
        <strain>137c / CC-125</strain>
    </source>
</reference>
<reference key="4">
    <citation type="journal article" date="2009" name="BMC Evol. Biol.">
        <title>Nucleotide diversity of the Chlamydomonas reinhardtii plastid genome: addressing the mutational-hazard hypothesis.</title>
        <authorList>
            <person name="Smith D.R."/>
            <person name="Lee R.W."/>
        </authorList>
    </citation>
    <scope>NUCLEOTIDE SEQUENCE [LARGE SCALE GENOMIC DNA]</scope>
    <source>
        <strain>CC-503</strain>
    </source>
</reference>
<reference key="5">
    <citation type="journal article" date="2002" name="Plant Cell">
        <title>The Chlamydomonas reinhardtii plastid chromosome: islands of genes in a sea of repeats.</title>
        <authorList>
            <person name="Maul J.E."/>
            <person name="Lilly J.W."/>
            <person name="Cui L."/>
            <person name="dePamphilis C.W."/>
            <person name="Miller W."/>
            <person name="Harris E.H."/>
            <person name="Stern D.B."/>
        </authorList>
    </citation>
    <scope>IDENTIFICATION</scope>
    <scope>COMPLETE PLASTID GENOME</scope>
</reference>